<proteinExistence type="inferred from homology"/>
<name>RIMM_RHIJ3</name>
<sequence length="189" mass="20655">MTKLENPVLMATIGGAQGLRGEVRAKAYTADPGALGDYGHLHSMDGRSFEVLEIREMKNVVVVRFRGVNDRNAAEALNGLELYIERDNLPDEELDEDEFYYADLEGLEARDDKGVSYGTVTGVFDFGAGDLLELKGPGKRPVLIPFSEASVLEIDLEAGTLLIDPLAAGLVDDPEELSKFTPDKPKKKK</sequence>
<evidence type="ECO:0000255" key="1">
    <source>
        <dbReference type="HAMAP-Rule" id="MF_00014"/>
    </source>
</evidence>
<evidence type="ECO:0000305" key="2"/>
<dbReference type="EMBL" id="AM236080">
    <property type="protein sequence ID" value="CAK10034.1"/>
    <property type="status" value="ALT_INIT"/>
    <property type="molecule type" value="Genomic_DNA"/>
</dbReference>
<dbReference type="RefSeq" id="WP_026158926.1">
    <property type="nucleotide sequence ID" value="NC_008380.1"/>
</dbReference>
<dbReference type="SMR" id="Q1MAK4"/>
<dbReference type="EnsemblBacteria" id="CAK10034">
    <property type="protein sequence ID" value="CAK10034"/>
    <property type="gene ID" value="RL4550"/>
</dbReference>
<dbReference type="KEGG" id="rle:RL4550"/>
<dbReference type="eggNOG" id="COG0806">
    <property type="taxonomic scope" value="Bacteria"/>
</dbReference>
<dbReference type="HOGENOM" id="CLU_077636_0_1_5"/>
<dbReference type="Proteomes" id="UP000006575">
    <property type="component" value="Chromosome"/>
</dbReference>
<dbReference type="GO" id="GO:0005737">
    <property type="term" value="C:cytoplasm"/>
    <property type="evidence" value="ECO:0007669"/>
    <property type="project" value="UniProtKB-SubCell"/>
</dbReference>
<dbReference type="GO" id="GO:0005840">
    <property type="term" value="C:ribosome"/>
    <property type="evidence" value="ECO:0007669"/>
    <property type="project" value="InterPro"/>
</dbReference>
<dbReference type="GO" id="GO:0043022">
    <property type="term" value="F:ribosome binding"/>
    <property type="evidence" value="ECO:0007669"/>
    <property type="project" value="InterPro"/>
</dbReference>
<dbReference type="GO" id="GO:0042274">
    <property type="term" value="P:ribosomal small subunit biogenesis"/>
    <property type="evidence" value="ECO:0007669"/>
    <property type="project" value="UniProtKB-UniRule"/>
</dbReference>
<dbReference type="GO" id="GO:0006364">
    <property type="term" value="P:rRNA processing"/>
    <property type="evidence" value="ECO:0007669"/>
    <property type="project" value="UniProtKB-UniRule"/>
</dbReference>
<dbReference type="Gene3D" id="2.30.30.240">
    <property type="entry name" value="PRC-barrel domain"/>
    <property type="match status" value="1"/>
</dbReference>
<dbReference type="Gene3D" id="2.40.30.60">
    <property type="entry name" value="RimM"/>
    <property type="match status" value="1"/>
</dbReference>
<dbReference type="HAMAP" id="MF_00014">
    <property type="entry name" value="Ribosome_mat_RimM"/>
    <property type="match status" value="1"/>
</dbReference>
<dbReference type="InterPro" id="IPR027275">
    <property type="entry name" value="PRC-brl_dom"/>
</dbReference>
<dbReference type="InterPro" id="IPR011033">
    <property type="entry name" value="PRC_barrel-like_sf"/>
</dbReference>
<dbReference type="InterPro" id="IPR011961">
    <property type="entry name" value="RimM"/>
</dbReference>
<dbReference type="InterPro" id="IPR002676">
    <property type="entry name" value="RimM_N"/>
</dbReference>
<dbReference type="InterPro" id="IPR036976">
    <property type="entry name" value="RimM_N_sf"/>
</dbReference>
<dbReference type="InterPro" id="IPR009000">
    <property type="entry name" value="Transl_B-barrel_sf"/>
</dbReference>
<dbReference type="NCBIfam" id="TIGR02273">
    <property type="entry name" value="16S_RimM"/>
    <property type="match status" value="1"/>
</dbReference>
<dbReference type="PANTHER" id="PTHR33692">
    <property type="entry name" value="RIBOSOME MATURATION FACTOR RIMM"/>
    <property type="match status" value="1"/>
</dbReference>
<dbReference type="PANTHER" id="PTHR33692:SF1">
    <property type="entry name" value="RIBOSOME MATURATION FACTOR RIMM"/>
    <property type="match status" value="1"/>
</dbReference>
<dbReference type="Pfam" id="PF05239">
    <property type="entry name" value="PRC"/>
    <property type="match status" value="1"/>
</dbReference>
<dbReference type="Pfam" id="PF01782">
    <property type="entry name" value="RimM"/>
    <property type="match status" value="1"/>
</dbReference>
<dbReference type="SUPFAM" id="SSF50346">
    <property type="entry name" value="PRC-barrel domain"/>
    <property type="match status" value="1"/>
</dbReference>
<dbReference type="SUPFAM" id="SSF50447">
    <property type="entry name" value="Translation proteins"/>
    <property type="match status" value="1"/>
</dbReference>
<protein>
    <recommendedName>
        <fullName evidence="1">Ribosome maturation factor RimM</fullName>
    </recommendedName>
</protein>
<organism>
    <name type="scientific">Rhizobium johnstonii (strain DSM 114642 / LMG 32736 / 3841)</name>
    <name type="common">Rhizobium leguminosarum bv. viciae</name>
    <dbReference type="NCBI Taxonomy" id="216596"/>
    <lineage>
        <taxon>Bacteria</taxon>
        <taxon>Pseudomonadati</taxon>
        <taxon>Pseudomonadota</taxon>
        <taxon>Alphaproteobacteria</taxon>
        <taxon>Hyphomicrobiales</taxon>
        <taxon>Rhizobiaceae</taxon>
        <taxon>Rhizobium/Agrobacterium group</taxon>
        <taxon>Rhizobium</taxon>
        <taxon>Rhizobium johnstonii</taxon>
    </lineage>
</organism>
<reference key="1">
    <citation type="journal article" date="2006" name="Genome Biol.">
        <title>The genome of Rhizobium leguminosarum has recognizable core and accessory components.</title>
        <authorList>
            <person name="Young J.P.W."/>
            <person name="Crossman L.C."/>
            <person name="Johnston A.W.B."/>
            <person name="Thomson N.R."/>
            <person name="Ghazoui Z.F."/>
            <person name="Hull K.H."/>
            <person name="Wexler M."/>
            <person name="Curson A.R.J."/>
            <person name="Todd J.D."/>
            <person name="Poole P.S."/>
            <person name="Mauchline T.H."/>
            <person name="East A.K."/>
            <person name="Quail M.A."/>
            <person name="Churcher C."/>
            <person name="Arrowsmith C."/>
            <person name="Cherevach I."/>
            <person name="Chillingworth T."/>
            <person name="Clarke K."/>
            <person name="Cronin A."/>
            <person name="Davis P."/>
            <person name="Fraser A."/>
            <person name="Hance Z."/>
            <person name="Hauser H."/>
            <person name="Jagels K."/>
            <person name="Moule S."/>
            <person name="Mungall K."/>
            <person name="Norbertczak H."/>
            <person name="Rabbinowitsch E."/>
            <person name="Sanders M."/>
            <person name="Simmonds M."/>
            <person name="Whitehead S."/>
            <person name="Parkhill J."/>
        </authorList>
    </citation>
    <scope>NUCLEOTIDE SEQUENCE [LARGE SCALE GENOMIC DNA]</scope>
    <source>
        <strain>DSM 114642 / LMG 32736 / 3841</strain>
    </source>
</reference>
<gene>
    <name evidence="1" type="primary">rimM</name>
    <name type="ordered locus">RL4550</name>
</gene>
<feature type="chain" id="PRO_0000321748" description="Ribosome maturation factor RimM">
    <location>
        <begin position="1"/>
        <end position="189"/>
    </location>
</feature>
<feature type="domain" description="PRC barrel" evidence="1">
    <location>
        <begin position="96"/>
        <end position="169"/>
    </location>
</feature>
<comment type="function">
    <text evidence="1">An accessory protein needed during the final step in the assembly of 30S ribosomal subunit, possibly for assembly of the head region. Essential for efficient processing of 16S rRNA. May be needed both before and after RbfA during the maturation of 16S rRNA. It has affinity for free ribosomal 30S subunits but not for 70S ribosomes.</text>
</comment>
<comment type="subunit">
    <text evidence="1">Binds ribosomal protein uS19.</text>
</comment>
<comment type="subcellular location">
    <subcellularLocation>
        <location evidence="1">Cytoplasm</location>
    </subcellularLocation>
</comment>
<comment type="domain">
    <text evidence="1">The PRC barrel domain binds ribosomal protein uS19.</text>
</comment>
<comment type="similarity">
    <text evidence="1">Belongs to the RimM family.</text>
</comment>
<comment type="sequence caution" evidence="2">
    <conflict type="erroneous initiation">
        <sequence resource="EMBL-CDS" id="CAK10034"/>
    </conflict>
</comment>
<keyword id="KW-0143">Chaperone</keyword>
<keyword id="KW-0963">Cytoplasm</keyword>
<keyword id="KW-0690">Ribosome biogenesis</keyword>
<keyword id="KW-0698">rRNA processing</keyword>
<accession>Q1MAK4</accession>